<keyword id="KW-0067">ATP-binding</keyword>
<keyword id="KW-1035">Host cytoplasm</keyword>
<keyword id="KW-0378">Hydrolase</keyword>
<keyword id="KW-0460">Magnesium</keyword>
<keyword id="KW-0479">Metal-binding</keyword>
<keyword id="KW-0489">Methyltransferase</keyword>
<keyword id="KW-0506">mRNA capping</keyword>
<keyword id="KW-0507">mRNA processing</keyword>
<keyword id="KW-0511">Multifunctional enzyme</keyword>
<keyword id="KW-0547">Nucleotide-binding</keyword>
<keyword id="KW-0548">Nucleotidyltransferase</keyword>
<keyword id="KW-0696">RNA-directed RNA polymerase</keyword>
<keyword id="KW-0949">S-adenosyl-L-methionine</keyword>
<keyword id="KW-0808">Transferase</keyword>
<keyword id="KW-0693">Viral RNA replication</keyword>
<keyword id="KW-0946">Virion</keyword>
<keyword id="KW-0862">Zinc</keyword>
<gene>
    <name type="primary">L</name>
</gene>
<accession>P13615</accession>
<reference key="1">
    <citation type="journal article" date="1988" name="Virology">
        <title>Nucleotide sequence of the L gene of vesicular stomatitis virus (New Jersey): identification of conserved domains in the New Jersey and Indiana L proteins.</title>
        <authorList>
            <person name="Feldhaus A.L."/>
            <person name="Lesnaw J.A."/>
        </authorList>
    </citation>
    <scope>NUCLEOTIDE SEQUENCE [GENOMIC RNA]</scope>
</reference>
<dbReference type="EC" id="2.7.7.48" evidence="2"/>
<dbReference type="EC" id="3.6.1.-" evidence="1"/>
<dbReference type="EC" id="2.7.7.88" evidence="1"/>
<dbReference type="EC" id="2.1.1.375" evidence="1"/>
<dbReference type="EMBL" id="M20166">
    <property type="protein sequence ID" value="AAA48440.1"/>
    <property type="molecule type" value="Genomic_RNA"/>
</dbReference>
<dbReference type="PIR" id="A28602">
    <property type="entry name" value="ZLVNNJ"/>
</dbReference>
<dbReference type="SMR" id="P13615"/>
<dbReference type="GO" id="GO:0030430">
    <property type="term" value="C:host cell cytoplasm"/>
    <property type="evidence" value="ECO:0007669"/>
    <property type="project" value="UniProtKB-SubCell"/>
</dbReference>
<dbReference type="GO" id="GO:0044423">
    <property type="term" value="C:virion component"/>
    <property type="evidence" value="ECO:0007669"/>
    <property type="project" value="UniProtKB-KW"/>
</dbReference>
<dbReference type="GO" id="GO:0005524">
    <property type="term" value="F:ATP binding"/>
    <property type="evidence" value="ECO:0007669"/>
    <property type="project" value="UniProtKB-KW"/>
</dbReference>
<dbReference type="GO" id="GO:0003924">
    <property type="term" value="F:GTPase activity"/>
    <property type="evidence" value="ECO:0007669"/>
    <property type="project" value="RHEA"/>
</dbReference>
<dbReference type="GO" id="GO:0046872">
    <property type="term" value="F:metal ion binding"/>
    <property type="evidence" value="ECO:0007669"/>
    <property type="project" value="UniProtKB-KW"/>
</dbReference>
<dbReference type="GO" id="GO:0004482">
    <property type="term" value="F:mRNA 5'-cap (guanine-N7-)-methyltransferase activity"/>
    <property type="evidence" value="ECO:0007669"/>
    <property type="project" value="InterPro"/>
</dbReference>
<dbReference type="GO" id="GO:0003968">
    <property type="term" value="F:RNA-directed RNA polymerase activity"/>
    <property type="evidence" value="ECO:0007669"/>
    <property type="project" value="UniProtKB-KW"/>
</dbReference>
<dbReference type="GO" id="GO:0039689">
    <property type="term" value="P:negative stranded viral RNA replication"/>
    <property type="evidence" value="ECO:0000250"/>
    <property type="project" value="UniProtKB"/>
</dbReference>
<dbReference type="FunFam" id="3.40.50.150:FF:000473">
    <property type="entry name" value="RNA-directed RNA polymerase L"/>
    <property type="match status" value="1"/>
</dbReference>
<dbReference type="InterPro" id="IPR039530">
    <property type="entry name" value="L_methyltransferase_rhabdo"/>
</dbReference>
<dbReference type="InterPro" id="IPR039736">
    <property type="entry name" value="L_poly_C"/>
</dbReference>
<dbReference type="InterPro" id="IPR048398">
    <property type="entry name" value="Methyltrans_Mon_C"/>
</dbReference>
<dbReference type="InterPro" id="IPR048397">
    <property type="entry name" value="Methyltrans_Mon_CD"/>
</dbReference>
<dbReference type="InterPro" id="IPR026890">
    <property type="entry name" value="Mononeg_mRNAcap"/>
</dbReference>
<dbReference type="InterPro" id="IPR014023">
    <property type="entry name" value="Mononeg_RNA_pol_cat"/>
</dbReference>
<dbReference type="InterPro" id="IPR025786">
    <property type="entry name" value="Mononega_L_MeTrfase"/>
</dbReference>
<dbReference type="InterPro" id="IPR017234">
    <property type="entry name" value="RNA-dir_pol_rhabdovirus"/>
</dbReference>
<dbReference type="NCBIfam" id="TIGR04198">
    <property type="entry name" value="paramyx_RNAcap"/>
    <property type="match status" value="1"/>
</dbReference>
<dbReference type="Pfam" id="PF21080">
    <property type="entry name" value="Methyltrans_Mon_1st"/>
    <property type="match status" value="1"/>
</dbReference>
<dbReference type="Pfam" id="PF14314">
    <property type="entry name" value="Methyltrans_Mon_2nd"/>
    <property type="match status" value="1"/>
</dbReference>
<dbReference type="Pfam" id="PF21081">
    <property type="entry name" value="Methyltrans_Mon_3rd"/>
    <property type="match status" value="1"/>
</dbReference>
<dbReference type="Pfam" id="PF14318">
    <property type="entry name" value="Mononeg_mRNAcap"/>
    <property type="match status" value="1"/>
</dbReference>
<dbReference type="Pfam" id="PF00946">
    <property type="entry name" value="Mononeg_RNA_pol"/>
    <property type="match status" value="1"/>
</dbReference>
<dbReference type="PIRSF" id="PIRSF037546">
    <property type="entry name" value="RNA_pol_RhabdoV_sub"/>
    <property type="match status" value="1"/>
</dbReference>
<dbReference type="PROSITE" id="PS50526">
    <property type="entry name" value="RDRP_SSRNA_NEG_NONSEG"/>
    <property type="match status" value="1"/>
</dbReference>
<dbReference type="PROSITE" id="PS51590">
    <property type="entry name" value="SAM_MT_MNV_L"/>
    <property type="match status" value="1"/>
</dbReference>
<evidence type="ECO:0000250" key="1">
    <source>
        <dbReference type="UniProtKB" id="P03523"/>
    </source>
</evidence>
<evidence type="ECO:0000250" key="2">
    <source>
        <dbReference type="UniProtKB" id="P28887"/>
    </source>
</evidence>
<evidence type="ECO:0000255" key="3"/>
<evidence type="ECO:0000255" key="4">
    <source>
        <dbReference type="PROSITE-ProRule" id="PRU00539"/>
    </source>
</evidence>
<evidence type="ECO:0000255" key="5">
    <source>
        <dbReference type="PROSITE-ProRule" id="PRU00923"/>
    </source>
</evidence>
<evidence type="ECO:0000305" key="6"/>
<sequence>MDFNLIEDSTHWEEEESDFLLRDILSKEDQMSYLNSADYNLNSPLISDDMVYLIKRMNHEEVPPIWRSKEWDSPLDMLKGCQAQPLSHQDMHNWFGTWIQNIQHDSAQGFTFLKEVDKEAEMTYDLVSTFLKGWVGKEYPFKPKGREIDSIALVGPLCQKFLDLHKVTLILNAVSLGETKELLTTFKGKYRMSCENIPIARLRLPSLGPVFMCKGWTYIHKERVLMDRNFLLMCKDVIIGRMQTFLSMIGRSDNKFSPDQIYTLANVYRIGDRILEQCGNRAYDLIKMIEPICNLKMMELARLHRPKIPKFPHFEEHLKGSVRELTKKSNKIQALYDLIMSIKDVDLVLVVYGSFRHWGHPFIDYFEGLKKLYTQVNMEKNIDKEHPQQLASDLARLVLLKQFSESKKWFVDLSKMPPKHPFYEHVVNKTWPTAAKIQDFGDNWHKLPLTQCFEIPDLIDPSVIYSDKSHSMNKKEVIQHVRTKPNIPIPSKKELQTMLTNKATNWKVFLKDIDGNGLDDDDLIIGLKGKERELKIAGRFFSLMSWRLREYFVITEYLIKTYYVPLFKGLTMADDLTSVIKKMMDSSSGQGLDDYSSVCLANHIDYEQWNNHQRKESNGPIFRVMGQFLGYPSLIERIHEFFEKSLIYYNGLPDLLTIRNGTLCNSTKHRVCWNGQKGGLEGLRQKGWSIVNLLVIQREAKIRNTAVKVLAQGDNQVICTQYKTRKTRSELELRAVLHQMAGNNNKIMEEIKRGTEKLGLIINDDETMQSADYLNYGKIPIFRGVIRGLETKRWSRVTCVTNDQIPTCANLMSSVSTNALTVAHFAESPINAMIQYNYFGTFARLLLFMHDPAIRQSLYTVKEKIPGLHTRTFKYAVLYLDPSIGGECGMALSRFLIRAFPDPETESLSFWKFIYEHARSLHLKKMAVMFGDLPIAKFRIEHINKLLEDPTSLNISMGMSPANLLKSEVKKCLIESRSSIKNEIIKDATIYMHQEEEKLRGFLWSINPLFPRFLSEFKAGTFLGVSEALINLFQNSRTIRNSFKRRYHKDLDELIIKSEISSLSHLGSMHYRLGDNHIWSCSASRADVLRYKSWTRKVVGTTVPHPLEMHGSPSKKENPCQLCNSSGLTYISVHCPKGITDVFNRRGPLPAYLGSNTSESTSILQPWEKESKIPIIKRATRLRDAISWFIPPESPLSTCILNNIRALTGEDWSSKQHGFKRTGSALHRFSTSRMSNGGFASQSPATLTRMIATTDTMRDFGTKNYDFMFQASLLYGQMTTSISRYGSPGSCTDHYHIRCKGCIREIEEVELNTSLEYRTPVVYHILEKWRNNTGSWGHQIKQLKPAEGNWESLSPVEQSYQVARCIGFLYGELTHKKSRQADDSSLFPLSIQLKVRGRGFLQGLLDGLMRSSCCQVIHRRSVSTLKRPANAVYGGLIYLIDKLSASSPFLSLVRTGPIRQELEQVPHKMSTSYPTNIRDLGSIVRNYFKYQCRPVERGHYKTYYNQIWLFSDVLSTEFIGPMRISSSLLKLLYRSSLTKKDKEELRELAALSSNLRSGEDWDDLHIKFFSNDLLFCPAEIRHACKFGIQKENEDIALYPNWGIEYIGNVIDIPVFYRAQNVQKDIRIPLRIQNPLMSGLRLGQLPTGAHYKMRTIISRLKIPYHDFLACGDGSGGMTVALLRLNRASRGIFNSLLDLSDTMLRGSSPEPPSALETLGGERSRCVNGDSCWEHPSDLSDKNTWKYFLHVKKGCGMSINLITMDMEVKDPTMSYKIELLVRQYVPVLLESDCCLIYKTYGTYIATQKDNSLTLIGSLFHSVQLVQTDLSSSNTSELYLVCRRLKDYIDTPFVDWIELYDSWENQYAFKDIKDEFHRARSLKPETTLVGIPPQFIPDPGVNLETLFQIAGVPTGVAHGVIITSMQSKNKLISNAIGSMCVISHFVMNTIRTTDSMPGPPSDGDVNKMCSALIGTCFWLSWMESDLNLYKTCLRSIMKSMPVRWFRALKNGKWFQKWDCKGDAIPKDSRLGDSMANIGNWIRAWELIRDGNISEPFDAAAVEMLTTSVDKSLSWKKILKTTGIPRLLNSDTDVIDQSILNVQIDIVENQAWQN</sequence>
<proteinExistence type="inferred from homology"/>
<name>L_VSNJH</name>
<comment type="function">
    <text evidence="1 2">Multifunctional enzyme responsible for RNA synthesis (replicase and transcriptase), cap addition, and cap methylation. Also performs the polyadenylation of subgenomic mRNAs by a stuttering mechanism at a slipery stop site present at the end of viral genes. The template is composed of the viral RNA tightly encapsidated by the nucleoprotein (N). L is packaged into virions during assembly and translocates to the 3' leader promoter to initiate transcription after entering the host cells. During transcription and replication of the genome, L does not bind the N-RNA complex directly, but is bridged by its non-catalytic cofactor P, which interacts with L and N oligomers simultaneously (By similarity). In the transcription mode, the polymerase performs the sequential transcription of all mRNAs using a termination-reinitiation mechanism responding to gene start and gene end signals. Some polymerase disengage from the template at each gene junction, resulting in a decreasing abundance of transcripts from the 3' to the 5' end of the genome (By similarity). The first gene is the most transcribed, and the last the least transcribed (By similarity). The viral phosphoprotein helps the polymerase to engage the N-RNA template and acts as a processivity factor. Polyribonucleotidyl transferase (PRNTase) adds the cap structure when the nascent RNA chain length has reached few nucleotides. Ribose 2'-O methylation of viral mRNA cap precedes and facilitates subsequent guanine-N-7 methylation, both activities being carried by the viral polymerase (By similarity). In the replication mode, the polymerase replicates the whole viral genome without recognizing the gene end transcriptional signals (By similarity). The ability of the polymerase to override the gene end signals as it is producing the antigenome is probably due to replicative RNA becoming encapsidated with nucleoprotein as it is synthesized (By similarity).</text>
</comment>
<comment type="catalytic activity">
    <reaction evidence="4">
        <text>RNA(n) + a ribonucleoside 5'-triphosphate = RNA(n+1) + diphosphate</text>
        <dbReference type="Rhea" id="RHEA:21248"/>
        <dbReference type="Rhea" id="RHEA-COMP:14527"/>
        <dbReference type="Rhea" id="RHEA-COMP:17342"/>
        <dbReference type="ChEBI" id="CHEBI:33019"/>
        <dbReference type="ChEBI" id="CHEBI:61557"/>
        <dbReference type="ChEBI" id="CHEBI:140395"/>
        <dbReference type="EC" id="2.7.7.48"/>
    </reaction>
</comment>
<comment type="catalytic activity">
    <reaction evidence="1">
        <text>GTP + H2O = GDP + phosphate + H(+)</text>
        <dbReference type="Rhea" id="RHEA:19669"/>
        <dbReference type="ChEBI" id="CHEBI:15377"/>
        <dbReference type="ChEBI" id="CHEBI:15378"/>
        <dbReference type="ChEBI" id="CHEBI:37565"/>
        <dbReference type="ChEBI" id="CHEBI:43474"/>
        <dbReference type="ChEBI" id="CHEBI:58189"/>
    </reaction>
</comment>
<comment type="catalytic activity">
    <reaction evidence="1">
        <text>a 5'-end triphospho-adenylyl-adenylyl-cytidylyl-adenosine in mRNA + GDP + H(+) = a 5'-end (5'-triphosphoguanosine)-adenylyl-adenylyl-cytidylyl-adenosine in mRNA + diphosphate</text>
        <dbReference type="Rhea" id="RHEA:65436"/>
        <dbReference type="Rhea" id="RHEA-COMP:16797"/>
        <dbReference type="Rhea" id="RHEA-COMP:16799"/>
        <dbReference type="ChEBI" id="CHEBI:15378"/>
        <dbReference type="ChEBI" id="CHEBI:33019"/>
        <dbReference type="ChEBI" id="CHEBI:58189"/>
        <dbReference type="ChEBI" id="CHEBI:156484"/>
        <dbReference type="ChEBI" id="CHEBI:156503"/>
        <dbReference type="EC" id="2.7.7.88"/>
    </reaction>
</comment>
<comment type="catalytic activity">
    <reaction evidence="1">
        <text>a 5'-end (5'-triphosphoguanosine)-adenylyl-adenylyl-cytidylyl-adenosine in mRNA + 2 S-adenosyl-L-methionine = a 5'-end (N(7)-methyl 5'-triphosphoguanosine)-(2'-O-methyladenylyl)-adenylyl-cytidylyl-adenosine in mRNA + 2 S-adenosyl-L-homocysteine + H(+)</text>
        <dbReference type="Rhea" id="RHEA:65376"/>
        <dbReference type="Rhea" id="RHEA-COMP:16797"/>
        <dbReference type="Rhea" id="RHEA-COMP:16798"/>
        <dbReference type="ChEBI" id="CHEBI:15378"/>
        <dbReference type="ChEBI" id="CHEBI:57856"/>
        <dbReference type="ChEBI" id="CHEBI:59789"/>
        <dbReference type="ChEBI" id="CHEBI:156483"/>
        <dbReference type="ChEBI" id="CHEBI:156484"/>
        <dbReference type="EC" id="2.1.1.375"/>
    </reaction>
</comment>
<comment type="catalytic activity">
    <reaction evidence="1">
        <text>a 5'-end (5'-triphosphoguanosine)-adenylyl-adenylyl-cytidylyl-adenosine in mRNA + S-adenosyl-L-methionine = a 5'-end (5'-triphosphoguanosine)-(2'-O-methyladenylyl)-adenylyl-cytidylyl-adenosine in mRNA + S-adenosyl-L-homocysteine + H(+)</text>
        <dbReference type="Rhea" id="RHEA:65380"/>
        <dbReference type="Rhea" id="RHEA-COMP:16797"/>
        <dbReference type="Rhea" id="RHEA-COMP:16801"/>
        <dbReference type="ChEBI" id="CHEBI:15378"/>
        <dbReference type="ChEBI" id="CHEBI:57856"/>
        <dbReference type="ChEBI" id="CHEBI:59789"/>
        <dbReference type="ChEBI" id="CHEBI:156482"/>
        <dbReference type="ChEBI" id="CHEBI:156484"/>
    </reaction>
</comment>
<comment type="catalytic activity">
    <reaction evidence="1">
        <text>a 5'-end (5'-triphosphoguanosine)-(2'-O-methyladenylyl)-adenylyl-cytidylyl-adenosine in mRNA + S-adenosyl-L-methionine = a 5'-end (N(7)-methyl 5'-triphosphoguanosine)-(2'-O-methyladenylyl)-adenylyl-cytidylyl-adenosine in mRNA + S-adenosyl-L-homocysteine</text>
        <dbReference type="Rhea" id="RHEA:65440"/>
        <dbReference type="Rhea" id="RHEA-COMP:16798"/>
        <dbReference type="Rhea" id="RHEA-COMP:16801"/>
        <dbReference type="ChEBI" id="CHEBI:57856"/>
        <dbReference type="ChEBI" id="CHEBI:59789"/>
        <dbReference type="ChEBI" id="CHEBI:156482"/>
        <dbReference type="ChEBI" id="CHEBI:156483"/>
    </reaction>
</comment>
<comment type="activity regulation">
    <text evidence="1">The GDP polyribonucleotidyltransferase activity is inhibited by the GDP analog DAPDP.</text>
</comment>
<comment type="subunit">
    <text evidence="1">May form homodimer. Interacts with the P protein; the association of P and L forms the polymerase complex, positions it on the template and allows to package the L polymerase in the virion, since P acts as a bridge between N and L. L binds loosely to N and is further bridged by the P protein, which interacts with L and N oligomers simultaneously.</text>
</comment>
<comment type="subcellular location">
    <subcellularLocation>
        <location evidence="1">Virion</location>
    </subcellularLocation>
    <subcellularLocation>
        <location evidence="1">Host cytoplasm</location>
    </subcellularLocation>
    <text evidence="1">L and P are packaged asymmetrically towards the blunt end of the virus. About 55 copies of L are present in the virion.</text>
</comment>
<comment type="domain">
    <text evidence="1">The RNA-dependent RNA polymerase (RdRp) domain is responsible for the RNA sythesis. The polyribonucleotidyl transferase (PRNTase) domain is responsible for the initiation of transcription at the 3'-end of the genome (priming) and pre-mRNA 5'-capping during start-stop transcription. The methyltransferase (MTase) domain is responsible for the cap methylation.</text>
</comment>
<comment type="similarity">
    <text evidence="6">Belongs to the rhabdoviridae protein L family.</text>
</comment>
<feature type="chain" id="PRO_0000222845" description="RNA-directed RNA polymerase L">
    <location>
        <begin position="1"/>
        <end position="2109"/>
    </location>
</feature>
<feature type="domain" description="RdRp catalytic" evidence="4">
    <location>
        <begin position="598"/>
        <end position="784"/>
    </location>
</feature>
<feature type="domain" description="Mononegavirus-type SAM-dependent 2'-O-MTase" evidence="5">
    <location>
        <begin position="1640"/>
        <end position="1837"/>
    </location>
</feature>
<feature type="region of interest" description="Capping domain" evidence="1">
    <location>
        <begin position="866"/>
        <end position="1334"/>
    </location>
</feature>
<feature type="region of interest" description="PRNTase domain" evidence="1">
    <location>
        <begin position="1081"/>
        <end position="1331"/>
    </location>
</feature>
<feature type="region of interest" description="priming-capping loop" evidence="1">
    <location>
        <begin position="1152"/>
        <end position="1189"/>
    </location>
</feature>
<feature type="region of interest" description="Connector domain" evidence="1">
    <location>
        <begin position="1358"/>
        <end position="1557"/>
    </location>
</feature>
<feature type="active site" description="Nucleophile; for GDP polyribonucleotidyltransferase" evidence="1">
    <location>
        <position position="1227"/>
    </location>
</feature>
<feature type="active site" description="For mRNA (nucleoside-2'-O-)-methyltransferase 2" evidence="1">
    <location>
        <position position="1651"/>
    </location>
</feature>
<feature type="active site" description="For mRNA (guanine-N(7)-)-methyltransferase and mRNA (nucleoside-2'-O-)-methyltransferase 2" evidence="1">
    <location>
        <position position="1762"/>
    </location>
</feature>
<feature type="active site" description="For mRNA (nucleoside-2'-O-)-methyltransferase 2" evidence="1">
    <location>
        <position position="1795"/>
    </location>
</feature>
<feature type="active site" description="For mRNA (nucleoside-2'-O-)-methyltransferase 2" evidence="1">
    <location>
        <position position="1833"/>
    </location>
</feature>
<feature type="binding site" evidence="2">
    <location>
        <position position="605"/>
    </location>
    <ligand>
        <name>Mg(2+)</name>
        <dbReference type="ChEBI" id="CHEBI:18420"/>
        <note>catalytic; for RNA-directed RNA polymerase activity</note>
    </ligand>
</feature>
<feature type="binding site" evidence="2">
    <location>
        <position position="714"/>
    </location>
    <ligand>
        <name>Mg(2+)</name>
        <dbReference type="ChEBI" id="CHEBI:18420"/>
        <note>catalytic; for RNA-directed RNA polymerase activity</note>
    </ligand>
</feature>
<feature type="binding site" evidence="1">
    <location>
        <position position="1081"/>
    </location>
    <ligand>
        <name>Zn(2+)</name>
        <dbReference type="ChEBI" id="CHEBI:29105"/>
        <note>structural</note>
    </ligand>
</feature>
<feature type="binding site" evidence="1">
    <location>
        <position position="1108"/>
    </location>
    <ligand>
        <name>Zn(2+)</name>
        <dbReference type="ChEBI" id="CHEBI:29105"/>
        <note>structural</note>
    </ligand>
</feature>
<feature type="binding site" evidence="1">
    <location>
        <position position="1120"/>
    </location>
    <ligand>
        <name>Zn(2+)</name>
        <dbReference type="ChEBI" id="CHEBI:29105"/>
        <label>2</label>
        <note>structural</note>
    </ligand>
</feature>
<feature type="binding site" evidence="1">
    <location>
        <position position="1123"/>
    </location>
    <ligand>
        <name>Zn(2+)</name>
        <dbReference type="ChEBI" id="CHEBI:29105"/>
        <label>2</label>
        <note>structural</note>
    </ligand>
</feature>
<feature type="binding site" evidence="1">
    <location>
        <position position="1294"/>
    </location>
    <ligand>
        <name>Zn(2+)</name>
        <dbReference type="ChEBI" id="CHEBI:29105"/>
        <label>2</label>
        <note>structural</note>
    </ligand>
</feature>
<feature type="binding site" evidence="1">
    <location>
        <position position="1296"/>
    </location>
    <ligand>
        <name>Zn(2+)</name>
        <dbReference type="ChEBI" id="CHEBI:29105"/>
        <label>2</label>
        <note>structural</note>
    </ligand>
</feature>
<feature type="binding site" evidence="1">
    <location>
        <position position="1299"/>
    </location>
    <ligand>
        <name>Zn(2+)</name>
        <dbReference type="ChEBI" id="CHEBI:29105"/>
        <note>structural</note>
    </ligand>
</feature>
<feature type="binding site" evidence="1">
    <location>
        <position position="1302"/>
    </location>
    <ligand>
        <name>Zn(2+)</name>
        <dbReference type="ChEBI" id="CHEBI:29105"/>
        <note>structural</note>
    </ligand>
</feature>
<feature type="binding site" evidence="3">
    <location>
        <begin position="1667"/>
        <end position="1676"/>
    </location>
    <ligand>
        <name>ATP</name>
        <dbReference type="ChEBI" id="CHEBI:30616"/>
    </ligand>
</feature>
<feature type="site" description="Interaction with the phosphoprotein" evidence="1">
    <location>
        <position position="704"/>
    </location>
</feature>
<feature type="site" description="Important for escaping from the 3'-terminal leader promotter followed by the formation of a stable leaderRNA elongation complex" evidence="1">
    <location>
        <position position="1183"/>
    </location>
</feature>
<feature type="site" description="Interaction with the phosphoprotein" evidence="1">
    <location>
        <position position="1419"/>
    </location>
</feature>
<feature type="site" description="Interaction with the phosphoprotein" evidence="1">
    <location>
        <position position="1427"/>
    </location>
</feature>
<feature type="site" description="Interaction with the phosphoprotein" evidence="1">
    <location>
        <position position="1496"/>
    </location>
</feature>
<feature type="site" description="Interaction with the phosphoprotein" evidence="1">
    <location>
        <position position="1911"/>
    </location>
</feature>
<feature type="site" description="Interaction with the phosphoprotein" evidence="1">
    <location>
        <position position="1981"/>
    </location>
</feature>
<feature type="site" description="Interaction with the phosphoprotein" evidence="1">
    <location>
        <position position="2022"/>
    </location>
</feature>
<protein>
    <recommendedName>
        <fullName>RNA-directed RNA polymerase L</fullName>
        <shortName>Protein L</shortName>
    </recommendedName>
    <alternativeName>
        <fullName>Large structural protein</fullName>
    </alternativeName>
    <alternativeName>
        <fullName>Replicase</fullName>
    </alternativeName>
    <alternativeName>
        <fullName>Transcriptase</fullName>
    </alternativeName>
    <domain>
        <recommendedName>
            <fullName>RNA-directed RNA polymerase</fullName>
            <ecNumber evidence="2">2.7.7.48</ecNumber>
        </recommendedName>
    </domain>
    <domain>
        <recommendedName>
            <fullName evidence="6">GTP phosphohydrolase</fullName>
            <ecNumber evidence="1">3.6.1.-</ecNumber>
        </recommendedName>
    </domain>
    <domain>
        <recommendedName>
            <fullName evidence="6">GDP polyribonucleotidyltransferase</fullName>
            <ecNumber evidence="1">2.7.7.88</ecNumber>
        </recommendedName>
        <alternativeName>
            <fullName evidence="6">PRNTase</fullName>
        </alternativeName>
    </domain>
    <domain>
        <recommendedName>
            <fullName evidence="6">mRNA cap methyltransferase</fullName>
            <ecNumber evidence="1">2.1.1.375</ecNumber>
        </recommendedName>
        <alternativeName>
            <fullName evidence="1">mRNA (guanine-N(7)-)-methyltransferase</fullName>
            <shortName evidence="1">G-N7-MTase</shortName>
        </alternativeName>
        <alternativeName>
            <fullName evidence="1">mRNA (nucleoside-2'-O-)-methyltransferase</fullName>
            <shortName evidence="1">N1-2'-O-MTase</shortName>
        </alternativeName>
    </domain>
</protein>
<organism>
    <name type="scientific">Vesicular stomatitis New Jersey virus (strain Hazelhurst subtype Hazelhurst)</name>
    <name type="common">VSNJV</name>
    <dbReference type="NCBI Taxonomy" id="11281"/>
    <lineage>
        <taxon>Viruses</taxon>
        <taxon>Riboviria</taxon>
        <taxon>Orthornavirae</taxon>
        <taxon>Negarnaviricota</taxon>
        <taxon>Haploviricotina</taxon>
        <taxon>Monjiviricetes</taxon>
        <taxon>Mononegavirales</taxon>
        <taxon>Rhabdoviridae</taxon>
        <taxon>Alpharhabdovirinae</taxon>
        <taxon>Vesiculovirus</taxon>
        <taxon>Vesiculovirus newjersey</taxon>
    </lineage>
</organism>
<organismHost>
    <name type="scientific">Aedes</name>
    <dbReference type="NCBI Taxonomy" id="7158"/>
</organismHost>
<organismHost>
    <name type="scientific">Bos taurus</name>
    <name type="common">Bovine</name>
    <dbReference type="NCBI Taxonomy" id="9913"/>
</organismHost>
<organismHost>
    <name type="scientific">Culicoides</name>
    <dbReference type="NCBI Taxonomy" id="58271"/>
</organismHost>
<organismHost>
    <name type="scientific">Equus asinus</name>
    <name type="common">Donkey</name>
    <name type="synonym">Equus africanus asinus</name>
    <dbReference type="NCBI Taxonomy" id="9793"/>
</organismHost>
<organismHost>
    <name type="scientific">Equus caballus</name>
    <name type="common">Horse</name>
    <dbReference type="NCBI Taxonomy" id="9796"/>
</organismHost>
<organismHost>
    <name type="scientific">Homo sapiens</name>
    <name type="common">Human</name>
    <dbReference type="NCBI Taxonomy" id="9606"/>
</organismHost>
<organismHost>
    <name type="scientific">Lutzomyia</name>
    <dbReference type="NCBI Taxonomy" id="252607"/>
</organismHost>
<organismHost>
    <name type="scientific">Musca domestica</name>
    <name type="common">House fly</name>
    <dbReference type="NCBI Taxonomy" id="7370"/>
</organismHost>
<organismHost>
    <name type="scientific">Simuliidae</name>
    <name type="common">black flies</name>
    <dbReference type="NCBI Taxonomy" id="7190"/>
</organismHost>
<organismHost>
    <name type="scientific">Sus scrofa</name>
    <name type="common">Pig</name>
    <dbReference type="NCBI Taxonomy" id="9823"/>
</organismHost>